<feature type="chain" id="PRO_0000149994" description="Antizyme inhibitor 1">
    <location>
        <begin position="1"/>
        <end position="448"/>
    </location>
</feature>
<feature type="site" description="Not modified" evidence="3">
    <location>
        <position position="69"/>
    </location>
</feature>
<evidence type="ECO:0000250" key="1"/>
<evidence type="ECO:0000250" key="2">
    <source>
        <dbReference type="UniProtKB" id="O14977"/>
    </source>
</evidence>
<evidence type="ECO:0000250" key="3">
    <source>
        <dbReference type="UniProtKB" id="O35484"/>
    </source>
</evidence>
<evidence type="ECO:0000269" key="4">
    <source>
    </source>
</evidence>
<evidence type="ECO:0000305" key="5"/>
<dbReference type="EMBL" id="D50734">
    <property type="protein sequence ID" value="BAA09365.1"/>
    <property type="molecule type" value="mRNA"/>
</dbReference>
<dbReference type="EMBL" id="D89983">
    <property type="protein sequence ID" value="BAA23594.1"/>
    <property type="molecule type" value="mRNA"/>
</dbReference>
<dbReference type="SMR" id="Q63764"/>
<dbReference type="FunCoup" id="Q63764">
    <property type="interactions" value="567"/>
</dbReference>
<dbReference type="STRING" id="10116.ENSRNOP00000007999"/>
<dbReference type="PhosphoSitePlus" id="Q63764"/>
<dbReference type="PaxDb" id="10116-ENSRNOP00000007999"/>
<dbReference type="UCSC" id="RGD:61934">
    <property type="organism name" value="rat"/>
</dbReference>
<dbReference type="AGR" id="RGD:61934"/>
<dbReference type="RGD" id="61934">
    <property type="gene designation" value="Azin1"/>
</dbReference>
<dbReference type="eggNOG" id="KOG0622">
    <property type="taxonomic scope" value="Eukaryota"/>
</dbReference>
<dbReference type="InParanoid" id="Q63764"/>
<dbReference type="PhylomeDB" id="Q63764"/>
<dbReference type="Reactome" id="R-RNO-350562">
    <property type="pathway name" value="Regulation of ornithine decarboxylase (ODC)"/>
</dbReference>
<dbReference type="PRO" id="PR:Q63764"/>
<dbReference type="Proteomes" id="UP000002494">
    <property type="component" value="Unplaced"/>
</dbReference>
<dbReference type="GO" id="GO:0005813">
    <property type="term" value="C:centrosome"/>
    <property type="evidence" value="ECO:0000314"/>
    <property type="project" value="RGD"/>
</dbReference>
<dbReference type="GO" id="GO:0005737">
    <property type="term" value="C:cytoplasm"/>
    <property type="evidence" value="ECO:0000318"/>
    <property type="project" value="GO_Central"/>
</dbReference>
<dbReference type="GO" id="GO:0005634">
    <property type="term" value="C:nucleus"/>
    <property type="evidence" value="ECO:0000250"/>
    <property type="project" value="UniProtKB"/>
</dbReference>
<dbReference type="GO" id="GO:0042978">
    <property type="term" value="F:ornithine decarboxylase activator activity"/>
    <property type="evidence" value="ECO:0000250"/>
    <property type="project" value="UniProtKB"/>
</dbReference>
<dbReference type="GO" id="GO:0004586">
    <property type="term" value="F:ornithine decarboxylase activity"/>
    <property type="evidence" value="ECO:0000318"/>
    <property type="project" value="GO_Central"/>
</dbReference>
<dbReference type="GO" id="GO:0044849">
    <property type="term" value="P:estrous cycle"/>
    <property type="evidence" value="ECO:0000270"/>
    <property type="project" value="RGD"/>
</dbReference>
<dbReference type="GO" id="GO:0042177">
    <property type="term" value="P:negative regulation of protein catabolic process"/>
    <property type="evidence" value="ECO:0000314"/>
    <property type="project" value="RGD"/>
</dbReference>
<dbReference type="GO" id="GO:0010825">
    <property type="term" value="P:positive regulation of centrosome duplication"/>
    <property type="evidence" value="ECO:0000315"/>
    <property type="project" value="RGD"/>
</dbReference>
<dbReference type="GO" id="GO:0050679">
    <property type="term" value="P:positive regulation of epithelial cell proliferation"/>
    <property type="evidence" value="ECO:0000314"/>
    <property type="project" value="RGD"/>
</dbReference>
<dbReference type="GO" id="GO:1902269">
    <property type="term" value="P:positive regulation of polyamine transmembrane transport"/>
    <property type="evidence" value="ECO:0000266"/>
    <property type="project" value="RGD"/>
</dbReference>
<dbReference type="GO" id="GO:0033387">
    <property type="term" value="P:putrescine biosynthetic process from arginine, via ornithine"/>
    <property type="evidence" value="ECO:0000318"/>
    <property type="project" value="GO_Central"/>
</dbReference>
<dbReference type="CDD" id="cd06831">
    <property type="entry name" value="PLPDE_III_ODC_like_AZI"/>
    <property type="match status" value="1"/>
</dbReference>
<dbReference type="FunFam" id="3.20.20.10:FF:000010">
    <property type="entry name" value="Antizyme inhibitor 1"/>
    <property type="match status" value="1"/>
</dbReference>
<dbReference type="FunFam" id="2.40.37.10:FF:000008">
    <property type="entry name" value="antizyme inhibitor 1"/>
    <property type="match status" value="1"/>
</dbReference>
<dbReference type="Gene3D" id="3.20.20.10">
    <property type="entry name" value="Alanine racemase"/>
    <property type="match status" value="1"/>
</dbReference>
<dbReference type="Gene3D" id="2.40.37.10">
    <property type="entry name" value="Lyase, Ornithine Decarboxylase, Chain A, domain 1"/>
    <property type="match status" value="1"/>
</dbReference>
<dbReference type="InterPro" id="IPR009006">
    <property type="entry name" value="Ala_racemase/Decarboxylase_C"/>
</dbReference>
<dbReference type="InterPro" id="IPR031178">
    <property type="entry name" value="Azin1"/>
</dbReference>
<dbReference type="InterPro" id="IPR022643">
    <property type="entry name" value="De-COase2_C"/>
</dbReference>
<dbReference type="InterPro" id="IPR022657">
    <property type="entry name" value="De-COase2_CS"/>
</dbReference>
<dbReference type="InterPro" id="IPR022644">
    <property type="entry name" value="De-COase2_N"/>
</dbReference>
<dbReference type="InterPro" id="IPR000183">
    <property type="entry name" value="Orn/DAP/Arg_de-COase"/>
</dbReference>
<dbReference type="InterPro" id="IPR002433">
    <property type="entry name" value="Orn_de-COase"/>
</dbReference>
<dbReference type="InterPro" id="IPR029066">
    <property type="entry name" value="PLP-binding_barrel"/>
</dbReference>
<dbReference type="PANTHER" id="PTHR11482:SF7">
    <property type="entry name" value="ANTIZYME INHIBITOR 1"/>
    <property type="match status" value="1"/>
</dbReference>
<dbReference type="PANTHER" id="PTHR11482">
    <property type="entry name" value="ARGININE/DIAMINOPIMELATE/ORNITHINE DECARBOXYLASE"/>
    <property type="match status" value="1"/>
</dbReference>
<dbReference type="Pfam" id="PF02784">
    <property type="entry name" value="Orn_Arg_deC_N"/>
    <property type="match status" value="1"/>
</dbReference>
<dbReference type="Pfam" id="PF00278">
    <property type="entry name" value="Orn_DAP_Arg_deC"/>
    <property type="match status" value="1"/>
</dbReference>
<dbReference type="PRINTS" id="PR01179">
    <property type="entry name" value="ODADCRBXLASE"/>
</dbReference>
<dbReference type="PRINTS" id="PR01182">
    <property type="entry name" value="ORNDCRBXLASE"/>
</dbReference>
<dbReference type="SUPFAM" id="SSF50621">
    <property type="entry name" value="Alanine racemase C-terminal domain-like"/>
    <property type="match status" value="1"/>
</dbReference>
<dbReference type="SUPFAM" id="SSF51419">
    <property type="entry name" value="PLP-binding barrel"/>
    <property type="match status" value="1"/>
</dbReference>
<dbReference type="PROSITE" id="PS00879">
    <property type="entry name" value="ODR_DC_2_2"/>
    <property type="match status" value="1"/>
</dbReference>
<proteinExistence type="evidence at protein level"/>
<sequence>MKGFIDDANYSVGLLDEGTNLGNVIDNYVYEHTLTGKNAFFVGDLGKIVKKHSQWQNVVAQIKPFYMVKCNSTPAVLEILAALGTGFACSTKNEMALVQELGVSPENIIYTSPCKQASQIKYAAKVGVNIMTCDNEVELKKIARNHPNAKVLLHIATEDNIGGEDGNMKFGTTLKNCRHLLECAKELDVQIIGVKFHISSACKEYQVYVHALSDARCVFDMAGEFGFTMNMLDIGGGFTGTEIQLEEVNHVISPLLDIYFPEGSGIQIISEPGSYYVSSAFTLAVNIIAKKVVENDKLSSGVEKNGSDEPAFVYYMNDGVYGSFASKLSEDLNTVPEVHKKYKEDEPLFTSSLWGPSCDELDQIVESCLLPELSVGDWLIFDNMGADSLHGPSAFSDTQRPAIYFMMSLSDWYEMQDAGITSDAMMKNFFFAPSCIQLSQEDNFSTEA</sequence>
<accession>Q63764</accession>
<gene>
    <name type="primary">Azin1</name>
    <name type="synonym">Oazi</name>
    <name type="synonym">Oazin</name>
</gene>
<organism>
    <name type="scientific">Rattus norvegicus</name>
    <name type="common">Rat</name>
    <dbReference type="NCBI Taxonomy" id="10116"/>
    <lineage>
        <taxon>Eukaryota</taxon>
        <taxon>Metazoa</taxon>
        <taxon>Chordata</taxon>
        <taxon>Craniata</taxon>
        <taxon>Vertebrata</taxon>
        <taxon>Euteleostomi</taxon>
        <taxon>Mammalia</taxon>
        <taxon>Eutheria</taxon>
        <taxon>Euarchontoglires</taxon>
        <taxon>Glires</taxon>
        <taxon>Rodentia</taxon>
        <taxon>Myomorpha</taxon>
        <taxon>Muroidea</taxon>
        <taxon>Muridae</taxon>
        <taxon>Murinae</taxon>
        <taxon>Rattus</taxon>
    </lineage>
</organism>
<reference key="1">
    <citation type="journal article" date="1996" name="J. Biol. Chem.">
        <title>Cloning of antizyme inhibitor, a highly homologous protein to ornithine decarboxylase.</title>
        <authorList>
            <person name="Murakami Y."/>
            <person name="Ichiba T."/>
            <person name="Matsufuji S."/>
            <person name="Hayashi S."/>
        </authorList>
    </citation>
    <scope>NUCLEOTIDE SEQUENCE [MRNA]</scope>
    <source>
        <strain>Wistar</strain>
        <tissue>Heart</tissue>
    </source>
</reference>
<reference key="2">
    <citation type="journal article" date="1997" name="Biochim. Biophys. Acta">
        <title>Cloning and sequencing of a human cDNA encoding ornithine decarboxylase antizyme inhibitor.</title>
        <authorList>
            <person name="Koguchi K."/>
            <person name="Kobayashi S."/>
            <person name="Hayashi T."/>
            <person name="Matsufuji S."/>
            <person name="Murakami Y."/>
            <person name="Hayashi S."/>
        </authorList>
    </citation>
    <scope>NUCLEOTIDE SEQUENCE [MRNA]</scope>
    <source>
        <strain>Wistar</strain>
    </source>
</reference>
<reference key="3">
    <citation type="journal article" date="1989" name="Biochim. Biophys. Acta">
        <title>Purification and characterization of antizyme inhibitor of ornithine decarboxylase from rat liver.</title>
        <authorList>
            <person name="Kitani T."/>
            <person name="Fujisawa H."/>
        </authorList>
    </citation>
    <scope>SUBUNIT</scope>
</reference>
<name>AZIN1_RAT</name>
<protein>
    <recommendedName>
        <fullName>Antizyme inhibitor 1</fullName>
        <shortName>AZI</shortName>
    </recommendedName>
    <alternativeName>
        <fullName>Ornithine decarboxylase antizyme inhibitor</fullName>
    </alternativeName>
</protein>
<keyword id="KW-0539">Nucleus</keyword>
<keyword id="KW-0620">Polyamine biosynthesis</keyword>
<keyword id="KW-1185">Reference proteome</keyword>
<keyword id="KW-0832">Ubl conjugation</keyword>
<comment type="function">
    <text evidence="2 3">Antizyme inhibitor (AZI) protein that positively regulates ornithine decarboxylase (ODC) activity and polyamine uptake. AZI is an enzymatically inactive ODC homolog that counteracts the negative effect of ODC antizymes (AZs) OAZ1, OAZ2 and OAZ3 on ODC activity by competing with ODC for antizyme-binding. Inhibits antizyme-dependent ODC degradation and releases ODC monomers from their inactive complex with antizymes, leading to formation of the catalytically active ODC homodimer and restoring polyamine production.</text>
</comment>
<comment type="subunit">
    <text evidence="2 3 4">Monomer (PubMed:2713421). Interacts with OAZ1 and OAZ3; this interaction disrupts the interaction between the antizyme and ODC1 (By similarity).</text>
</comment>
<comment type="subcellular location">
    <subcellularLocation>
        <location evidence="1">Nucleus</location>
    </subcellularLocation>
</comment>
<comment type="tissue specificity">
    <text>Expressed in various tissues including liver, heart and kidney.</text>
</comment>
<comment type="PTM">
    <text evidence="1">Ubiquitinated, leading to its proteasomal degradation; a process that is reduced in presence of antizyme OAZ1.</text>
</comment>
<comment type="similarity">
    <text evidence="5">Belongs to the Orn/Lys/Arg decarboxylase class-II family. ODC antizyme inhibitor subfamily.</text>
</comment>